<organism>
    <name type="scientific">Schizosaccharomyces pombe (strain 972 / ATCC 24843)</name>
    <name type="common">Fission yeast</name>
    <dbReference type="NCBI Taxonomy" id="284812"/>
    <lineage>
        <taxon>Eukaryota</taxon>
        <taxon>Fungi</taxon>
        <taxon>Dikarya</taxon>
        <taxon>Ascomycota</taxon>
        <taxon>Taphrinomycotina</taxon>
        <taxon>Schizosaccharomycetes</taxon>
        <taxon>Schizosaccharomycetales</taxon>
        <taxon>Schizosaccharomycetaceae</taxon>
        <taxon>Schizosaccharomyces</taxon>
    </lineage>
</organism>
<dbReference type="EMBL" id="AY034033">
    <property type="protein sequence ID" value="AAK57741.1"/>
    <property type="molecule type" value="mRNA"/>
</dbReference>
<dbReference type="EMBL" id="CU329670">
    <property type="protein sequence ID" value="CAB11739.3"/>
    <property type="molecule type" value="Genomic_DNA"/>
</dbReference>
<dbReference type="PIR" id="T39050">
    <property type="entry name" value="T39050"/>
</dbReference>
<dbReference type="PIR" id="T50299">
    <property type="entry name" value="T50299"/>
</dbReference>
<dbReference type="RefSeq" id="NP_593910.2">
    <property type="nucleotide sequence ID" value="NM_001019340.2"/>
</dbReference>
<dbReference type="BioGRID" id="278620">
    <property type="interactions" value="17"/>
</dbReference>
<dbReference type="FunCoup" id="Q96UP3">
    <property type="interactions" value="272"/>
</dbReference>
<dbReference type="STRING" id="284812.Q96UP3"/>
<dbReference type="iPTMnet" id="Q96UP3"/>
<dbReference type="PaxDb" id="4896-SPAC6F6.17.1"/>
<dbReference type="EnsemblFungi" id="SPAC6F6.17.1">
    <property type="protein sequence ID" value="SPAC6F6.17.1:pep"/>
    <property type="gene ID" value="SPAC6F6.17"/>
</dbReference>
<dbReference type="GeneID" id="2542144"/>
<dbReference type="KEGG" id="spo:2542144"/>
<dbReference type="PomBase" id="SPAC6F6.17">
    <property type="gene designation" value="rif1"/>
</dbReference>
<dbReference type="VEuPathDB" id="FungiDB:SPAC6F6.17"/>
<dbReference type="eggNOG" id="ENOG502QSZW">
    <property type="taxonomic scope" value="Eukaryota"/>
</dbReference>
<dbReference type="HOGENOM" id="CLU_005497_0_0_1"/>
<dbReference type="InParanoid" id="Q96UP3"/>
<dbReference type="OMA" id="FMTPPHL"/>
<dbReference type="PhylomeDB" id="Q96UP3"/>
<dbReference type="PRO" id="PR:Q96UP3"/>
<dbReference type="Proteomes" id="UP000002485">
    <property type="component" value="Chromosome I"/>
</dbReference>
<dbReference type="GO" id="GO:0000785">
    <property type="term" value="C:chromatin"/>
    <property type="evidence" value="ECO:0000314"/>
    <property type="project" value="PomBase"/>
</dbReference>
<dbReference type="GO" id="GO:0140445">
    <property type="term" value="C:chromosome, telomeric repeat region"/>
    <property type="evidence" value="ECO:0000314"/>
    <property type="project" value="PomBase"/>
</dbReference>
<dbReference type="GO" id="GO:0005730">
    <property type="term" value="C:nucleolus"/>
    <property type="evidence" value="ECO:0007005"/>
    <property type="project" value="PomBase"/>
</dbReference>
<dbReference type="GO" id="GO:0005634">
    <property type="term" value="C:nucleus"/>
    <property type="evidence" value="ECO:0007005"/>
    <property type="project" value="PomBase"/>
</dbReference>
<dbReference type="GO" id="GO:0140463">
    <property type="term" value="F:chromatin-protein adaptor activity"/>
    <property type="evidence" value="ECO:0000269"/>
    <property type="project" value="PomBase"/>
</dbReference>
<dbReference type="GO" id="GO:0051880">
    <property type="term" value="F:G-quadruplex DNA binding"/>
    <property type="evidence" value="ECO:0000269"/>
    <property type="project" value="PomBase"/>
</dbReference>
<dbReference type="GO" id="GO:0000723">
    <property type="term" value="P:telomere maintenance"/>
    <property type="evidence" value="ECO:0000315"/>
    <property type="project" value="PomBase"/>
</dbReference>
<dbReference type="InterPro" id="IPR016024">
    <property type="entry name" value="ARM-type_fold"/>
</dbReference>
<dbReference type="InterPro" id="IPR022031">
    <property type="entry name" value="Rif1_N"/>
</dbReference>
<dbReference type="PANTHER" id="PTHR22928">
    <property type="entry name" value="TELOMERE-ASSOCIATED PROTEIN RIF1"/>
    <property type="match status" value="1"/>
</dbReference>
<dbReference type="PANTHER" id="PTHR22928:SF3">
    <property type="entry name" value="TELOMERE-ASSOCIATED PROTEIN RIF1"/>
    <property type="match status" value="1"/>
</dbReference>
<dbReference type="Pfam" id="PF12231">
    <property type="entry name" value="Rif1_N"/>
    <property type="match status" value="1"/>
</dbReference>
<dbReference type="SUPFAM" id="SSF48371">
    <property type="entry name" value="ARM repeat"/>
    <property type="match status" value="1"/>
</dbReference>
<gene>
    <name type="primary">rif1</name>
    <name type="ORF">SPAC6F6.17</name>
    <name type="ORF">SPAPJ736.01</name>
</gene>
<sequence>MTKEIAVKEASNMLLQEPSTPSSQAVGLSSSPSSSIRKKKVNFSSELENSPGGNRPSFGLPKRGILKTSTPLSSIKQPNFQSFEGNESEKETSLQELQSSFCSGIENLQHVEKSARIETYSKLSSFLKIYTPSLPEDPIFPLLNQLCNFLLSDRCSNNSEGSPDFQLNTQANKLLSILLWHPTISSHIQPETATVFIEQSLNFLEGPKLTKALAAQHLHLLSCQKCPLSIHPLCNRILDVCFNISFPSLVIGQERLAVLTKILSQFPLEFSRRVVDWAPYLLACLVDASRPIREKALLLALDLSKHLYHDKLVARTILANFRSDIKGTAFVLIMTEQFEKLVIEEDDGVYVAHAWAAIISVLGGARISSWEYFNTWLKIIQLCFNSMNPLTKCAAQTSWIRLIHEFSLSETLTQATKRLTLLCQPISMVLGSRNLPTVKNAAMTTLIALIYACLRPGISDAMLSLLWDSVIVNILEKCALKNEVTIFESSNILLALFNTLSNGVWKDDRLVCRESVEAKELPKLNPVWVRANCSRTIEPVKTLLLLAKPDHTVKTTTPARKQHIRGLSYEQSSSVWSTYIKCLASAGQKEIKRSVETGRAICCICSSLHKFLYSKSIRKDELYVERVSRFALMVKSAIEAFGINTFVEASYLVSDNQLVLIDQTKAIDSYDHVPISPLIYLLHSLALLTNGTLFSTVHAAYSSILSSIEEYHLRFGLKLMLLWDCVSPLSDDGTLVLARVLVSHEVSRLTSEALLSELKSRNGNNSVEEGFSEEERSILLKLLSWNVKFCSISDAGSVNNLLQQYFTAIYKFEGCGSVFPFVVDPFTTILDDVLSFEANKVYSFAISLMKVSTFESCTKELPPVTLPENIRQHLDSYNHMVELYNTLLQRLSSSDQVDLQCRYLHELSEFIKKIPKEFIFHTICKLSKGLIPCFLMNAFPQLEKSTTLQKSCTNFCILILQLLLNSTATASNILESLSPLLTSGLKSISKEVVLAAIKFWNQVFGKFESEEYPIELQKTISYLSKTYIILLPFQSLCPGGKQANHQSSEKMSDILKGVDELRSVSKNGPYASSQDKGEKTTEFSGPGKPNNDNYIQIASVQELDDSSKGKAGKMPASKKNKRQKGDVKKIDETKNEATDMEESLTTPSGKVNKEVIVDDTSLRDEAIVPDKAIDVADNSNALLKENISSQSNRKADNNGTPSVNNSFTTANNDECSKENSQIEPEGQTASREGVLSTPRSTRKKRKLGRKSQSSNVNKEVAISEVSATLENVEVIERHGISEQGQNLDESACVLTNESSLSQTEIPEEKTENETTAVNGFENSKKRQFSSLLSGSIDTNNESNKVSSVEFDKSGPQDIIQSMTEATFEIEKNIQDLKSEEVQKLSDLLMRLQRAILSRIA</sequence>
<protein>
    <recommendedName>
        <fullName>Telomere length regulator protein rif1</fullName>
    </recommendedName>
</protein>
<proteinExistence type="evidence at protein level"/>
<comment type="function">
    <text evidence="2">Negatively regulates telomere length. Appears to play no role in transcriptional silencing of telomeric loci.</text>
</comment>
<comment type="subunit">
    <text>Recruited to telomeres by interaction with taz1. Does not interact with rap1, unlike the orthologous protein of budding yeast.</text>
</comment>
<comment type="subcellular location">
    <subcellularLocation>
        <location evidence="2">Nucleus</location>
    </subcellularLocation>
    <subcellularLocation>
        <location evidence="2">Chromosome</location>
        <location evidence="2">Telomere</location>
    </subcellularLocation>
    <text>Localized to telomeres. This interaction may be increased by perturbation of telomere structure, for instance by loss of the rap1 protein.</text>
</comment>
<comment type="similarity">
    <text evidence="3">Belongs to the RIF1 family.</text>
</comment>
<evidence type="ECO:0000256" key="1">
    <source>
        <dbReference type="SAM" id="MobiDB-lite"/>
    </source>
</evidence>
<evidence type="ECO:0000269" key="2">
    <source>
    </source>
</evidence>
<evidence type="ECO:0000305" key="3"/>
<name>RIF1_SCHPO</name>
<feature type="chain" id="PRO_0000097335" description="Telomere length regulator protein rif1">
    <location>
        <begin position="1"/>
        <end position="1400"/>
    </location>
</feature>
<feature type="region of interest" description="Disordered" evidence="1">
    <location>
        <begin position="1"/>
        <end position="63"/>
    </location>
</feature>
<feature type="region of interest" description="Disordered" evidence="1">
    <location>
        <begin position="1065"/>
        <end position="1258"/>
    </location>
</feature>
<feature type="compositionally biased region" description="Low complexity" evidence="1">
    <location>
        <begin position="22"/>
        <end position="35"/>
    </location>
</feature>
<feature type="compositionally biased region" description="Polar residues" evidence="1">
    <location>
        <begin position="42"/>
        <end position="52"/>
    </location>
</feature>
<feature type="compositionally biased region" description="Polar residues" evidence="1">
    <location>
        <begin position="1065"/>
        <end position="1074"/>
    </location>
</feature>
<feature type="compositionally biased region" description="Polar residues" evidence="1">
    <location>
        <begin position="1090"/>
        <end position="1099"/>
    </location>
</feature>
<feature type="compositionally biased region" description="Basic and acidic residues" evidence="1">
    <location>
        <begin position="1123"/>
        <end position="1137"/>
    </location>
</feature>
<feature type="compositionally biased region" description="Basic and acidic residues" evidence="1">
    <location>
        <begin position="1151"/>
        <end position="1174"/>
    </location>
</feature>
<feature type="compositionally biased region" description="Polar residues" evidence="1">
    <location>
        <begin position="1177"/>
        <end position="1230"/>
    </location>
</feature>
<feature type="compositionally biased region" description="Basic residues" evidence="1">
    <location>
        <begin position="1240"/>
        <end position="1249"/>
    </location>
</feature>
<keyword id="KW-0131">Cell cycle</keyword>
<keyword id="KW-0158">Chromosome</keyword>
<keyword id="KW-0539">Nucleus</keyword>
<keyword id="KW-1185">Reference proteome</keyword>
<keyword id="KW-0779">Telomere</keyword>
<reference key="1">
    <citation type="journal article" date="2001" name="Curr. Biol.">
        <title>spRap1 and spRif1, recruited to telomeres by Taz1, are essential for telomere function in fission yeast.</title>
        <authorList>
            <person name="Kanoh J."/>
            <person name="Ishikawa F."/>
        </authorList>
    </citation>
    <scope>NUCLEOTIDE SEQUENCE [MRNA]</scope>
    <scope>FUNCTION</scope>
    <scope>INTERACTION WITH TAZ1</scope>
    <scope>SUBCELLULAR LOCATION</scope>
</reference>
<reference key="2">
    <citation type="journal article" date="2002" name="Nature">
        <title>The genome sequence of Schizosaccharomyces pombe.</title>
        <authorList>
            <person name="Wood V."/>
            <person name="Gwilliam R."/>
            <person name="Rajandream M.A."/>
            <person name="Lyne M.H."/>
            <person name="Lyne R."/>
            <person name="Stewart A."/>
            <person name="Sgouros J.G."/>
            <person name="Peat N."/>
            <person name="Hayles J."/>
            <person name="Baker S.G."/>
            <person name="Basham D."/>
            <person name="Bowman S."/>
            <person name="Brooks K."/>
            <person name="Brown D."/>
            <person name="Brown S."/>
            <person name="Chillingworth T."/>
            <person name="Churcher C.M."/>
            <person name="Collins M."/>
            <person name="Connor R."/>
            <person name="Cronin A."/>
            <person name="Davis P."/>
            <person name="Feltwell T."/>
            <person name="Fraser A."/>
            <person name="Gentles S."/>
            <person name="Goble A."/>
            <person name="Hamlin N."/>
            <person name="Harris D.E."/>
            <person name="Hidalgo J."/>
            <person name="Hodgson G."/>
            <person name="Holroyd S."/>
            <person name="Hornsby T."/>
            <person name="Howarth S."/>
            <person name="Huckle E.J."/>
            <person name="Hunt S."/>
            <person name="Jagels K."/>
            <person name="James K.D."/>
            <person name="Jones L."/>
            <person name="Jones M."/>
            <person name="Leather S."/>
            <person name="McDonald S."/>
            <person name="McLean J."/>
            <person name="Mooney P."/>
            <person name="Moule S."/>
            <person name="Mungall K.L."/>
            <person name="Murphy L.D."/>
            <person name="Niblett D."/>
            <person name="Odell C."/>
            <person name="Oliver K."/>
            <person name="O'Neil S."/>
            <person name="Pearson D."/>
            <person name="Quail M.A."/>
            <person name="Rabbinowitsch E."/>
            <person name="Rutherford K.M."/>
            <person name="Rutter S."/>
            <person name="Saunders D."/>
            <person name="Seeger K."/>
            <person name="Sharp S."/>
            <person name="Skelton J."/>
            <person name="Simmonds M.N."/>
            <person name="Squares R."/>
            <person name="Squares S."/>
            <person name="Stevens K."/>
            <person name="Taylor K."/>
            <person name="Taylor R.G."/>
            <person name="Tivey A."/>
            <person name="Walsh S.V."/>
            <person name="Warren T."/>
            <person name="Whitehead S."/>
            <person name="Woodward J.R."/>
            <person name="Volckaert G."/>
            <person name="Aert R."/>
            <person name="Robben J."/>
            <person name="Grymonprez B."/>
            <person name="Weltjens I."/>
            <person name="Vanstreels E."/>
            <person name="Rieger M."/>
            <person name="Schaefer M."/>
            <person name="Mueller-Auer S."/>
            <person name="Gabel C."/>
            <person name="Fuchs M."/>
            <person name="Duesterhoeft A."/>
            <person name="Fritzc C."/>
            <person name="Holzer E."/>
            <person name="Moestl D."/>
            <person name="Hilbert H."/>
            <person name="Borzym K."/>
            <person name="Langer I."/>
            <person name="Beck A."/>
            <person name="Lehrach H."/>
            <person name="Reinhardt R."/>
            <person name="Pohl T.M."/>
            <person name="Eger P."/>
            <person name="Zimmermann W."/>
            <person name="Wedler H."/>
            <person name="Wambutt R."/>
            <person name="Purnelle B."/>
            <person name="Goffeau A."/>
            <person name="Cadieu E."/>
            <person name="Dreano S."/>
            <person name="Gloux S."/>
            <person name="Lelaure V."/>
            <person name="Mottier S."/>
            <person name="Galibert F."/>
            <person name="Aves S.J."/>
            <person name="Xiang Z."/>
            <person name="Hunt C."/>
            <person name="Moore K."/>
            <person name="Hurst S.M."/>
            <person name="Lucas M."/>
            <person name="Rochet M."/>
            <person name="Gaillardin C."/>
            <person name="Tallada V.A."/>
            <person name="Garzon A."/>
            <person name="Thode G."/>
            <person name="Daga R.R."/>
            <person name="Cruzado L."/>
            <person name="Jimenez J."/>
            <person name="Sanchez M."/>
            <person name="del Rey F."/>
            <person name="Benito J."/>
            <person name="Dominguez A."/>
            <person name="Revuelta J.L."/>
            <person name="Moreno S."/>
            <person name="Armstrong J."/>
            <person name="Forsburg S.L."/>
            <person name="Cerutti L."/>
            <person name="Lowe T."/>
            <person name="McCombie W.R."/>
            <person name="Paulsen I."/>
            <person name="Potashkin J."/>
            <person name="Shpakovski G.V."/>
            <person name="Ussery D."/>
            <person name="Barrell B.G."/>
            <person name="Nurse P."/>
        </authorList>
    </citation>
    <scope>NUCLEOTIDE SEQUENCE [LARGE SCALE GENOMIC DNA]</scope>
    <source>
        <strain>972 / ATCC 24843</strain>
    </source>
</reference>
<accession>Q96UP3</accession>
<accession>O14247</accession>
<accession>Q9P7P5</accession>